<reference key="1">
    <citation type="journal article" date="2009" name="BMC Genomics">
        <title>Analysis of the Rickettsia africae genome reveals that virulence acquisition in Rickettsia species may be explained by genome reduction.</title>
        <authorList>
            <person name="Fournier P.-E."/>
            <person name="El Karkouri K."/>
            <person name="Leroy Q."/>
            <person name="Robert C."/>
            <person name="Giumelli B."/>
            <person name="Renesto P."/>
            <person name="Socolovschi C."/>
            <person name="Parola P."/>
            <person name="Audic S."/>
            <person name="Raoult D."/>
        </authorList>
    </citation>
    <scope>NUCLEOTIDE SEQUENCE [LARGE SCALE GENOMIC DNA]</scope>
    <source>
        <strain>ESF-5</strain>
    </source>
</reference>
<proteinExistence type="inferred from homology"/>
<evidence type="ECO:0000255" key="1">
    <source>
        <dbReference type="HAMAP-Rule" id="MF_00528"/>
    </source>
</evidence>
<accession>C3PLU6</accession>
<comment type="function">
    <text evidence="1">Nucleoside triphosphate pyrophosphatase. May have a dual role in cell division arrest and in preventing the incorporation of modified nucleotides into cellular nucleic acids.</text>
</comment>
<comment type="catalytic activity">
    <reaction evidence="1">
        <text>a ribonucleoside 5'-triphosphate + H2O = a ribonucleoside 5'-phosphate + diphosphate + H(+)</text>
        <dbReference type="Rhea" id="RHEA:23996"/>
        <dbReference type="ChEBI" id="CHEBI:15377"/>
        <dbReference type="ChEBI" id="CHEBI:15378"/>
        <dbReference type="ChEBI" id="CHEBI:33019"/>
        <dbReference type="ChEBI" id="CHEBI:58043"/>
        <dbReference type="ChEBI" id="CHEBI:61557"/>
        <dbReference type="EC" id="3.6.1.9"/>
    </reaction>
</comment>
<comment type="catalytic activity">
    <reaction evidence="1">
        <text>a 2'-deoxyribonucleoside 5'-triphosphate + H2O = a 2'-deoxyribonucleoside 5'-phosphate + diphosphate + H(+)</text>
        <dbReference type="Rhea" id="RHEA:44644"/>
        <dbReference type="ChEBI" id="CHEBI:15377"/>
        <dbReference type="ChEBI" id="CHEBI:15378"/>
        <dbReference type="ChEBI" id="CHEBI:33019"/>
        <dbReference type="ChEBI" id="CHEBI:61560"/>
        <dbReference type="ChEBI" id="CHEBI:65317"/>
        <dbReference type="EC" id="3.6.1.9"/>
    </reaction>
</comment>
<comment type="cofactor">
    <cofactor evidence="1">
        <name>a divalent metal cation</name>
        <dbReference type="ChEBI" id="CHEBI:60240"/>
    </cofactor>
</comment>
<comment type="subcellular location">
    <subcellularLocation>
        <location evidence="1">Cytoplasm</location>
    </subcellularLocation>
</comment>
<comment type="similarity">
    <text evidence="1">Belongs to the Maf family.</text>
</comment>
<name>NTPP_RICAE</name>
<sequence>MKQNRKNLPIILASSSPARIELLNRIKIIPSQIIPADIDETPNLRELPAPLAIRLAYEKAIKIASQIEASAIIIAADTVAAVGRRILPKATTYEEVKNCIKMLSGRRHRVYTGLCIIKKENDQLTVRQKIVQTIVKFKKLSDEEINFYCSLDEGIDKAGGCKISGYAEAFISFISGSYSNVMGLPLFETVNALTSLGFRCSSIMPAKMNYCHSAT</sequence>
<gene>
    <name type="ordered locus">RAF_ORF1157</name>
</gene>
<keyword id="KW-0963">Cytoplasm</keyword>
<keyword id="KW-0378">Hydrolase</keyword>
<keyword id="KW-0546">Nucleotide metabolism</keyword>
<protein>
    <recommendedName>
        <fullName evidence="1">Nucleoside triphosphate pyrophosphatase</fullName>
        <ecNumber evidence="1">3.6.1.9</ecNumber>
    </recommendedName>
    <alternativeName>
        <fullName evidence="1">Nucleotide pyrophosphatase</fullName>
        <shortName evidence="1">Nucleotide PPase</shortName>
    </alternativeName>
</protein>
<dbReference type="EC" id="3.6.1.9" evidence="1"/>
<dbReference type="EMBL" id="CP001612">
    <property type="protein sequence ID" value="ACP53936.1"/>
    <property type="molecule type" value="Genomic_DNA"/>
</dbReference>
<dbReference type="RefSeq" id="WP_012720062.1">
    <property type="nucleotide sequence ID" value="NC_012633.1"/>
</dbReference>
<dbReference type="SMR" id="C3PLU6"/>
<dbReference type="KEGG" id="raf:RAF_ORF1157"/>
<dbReference type="HOGENOM" id="CLU_040416_2_0_5"/>
<dbReference type="Proteomes" id="UP000002305">
    <property type="component" value="Chromosome"/>
</dbReference>
<dbReference type="GO" id="GO:0005737">
    <property type="term" value="C:cytoplasm"/>
    <property type="evidence" value="ECO:0007669"/>
    <property type="project" value="UniProtKB-SubCell"/>
</dbReference>
<dbReference type="GO" id="GO:0047429">
    <property type="term" value="F:nucleoside triphosphate diphosphatase activity"/>
    <property type="evidence" value="ECO:0007669"/>
    <property type="project" value="UniProtKB-EC"/>
</dbReference>
<dbReference type="GO" id="GO:0009117">
    <property type="term" value="P:nucleotide metabolic process"/>
    <property type="evidence" value="ECO:0007669"/>
    <property type="project" value="UniProtKB-KW"/>
</dbReference>
<dbReference type="CDD" id="cd00555">
    <property type="entry name" value="Maf"/>
    <property type="match status" value="1"/>
</dbReference>
<dbReference type="Gene3D" id="3.90.950.10">
    <property type="match status" value="1"/>
</dbReference>
<dbReference type="HAMAP" id="MF_00528">
    <property type="entry name" value="Maf"/>
    <property type="match status" value="1"/>
</dbReference>
<dbReference type="InterPro" id="IPR029001">
    <property type="entry name" value="ITPase-like_fam"/>
</dbReference>
<dbReference type="InterPro" id="IPR003697">
    <property type="entry name" value="Maf-like"/>
</dbReference>
<dbReference type="NCBIfam" id="TIGR00172">
    <property type="entry name" value="maf"/>
    <property type="match status" value="1"/>
</dbReference>
<dbReference type="PANTHER" id="PTHR43213">
    <property type="entry name" value="BIFUNCTIONAL DTTP/UTP PYROPHOSPHATASE/METHYLTRANSFERASE PROTEIN-RELATED"/>
    <property type="match status" value="1"/>
</dbReference>
<dbReference type="PANTHER" id="PTHR43213:SF5">
    <property type="entry name" value="BIFUNCTIONAL DTTP_UTP PYROPHOSPHATASE_METHYLTRANSFERASE PROTEIN-RELATED"/>
    <property type="match status" value="1"/>
</dbReference>
<dbReference type="Pfam" id="PF02545">
    <property type="entry name" value="Maf"/>
    <property type="match status" value="1"/>
</dbReference>
<dbReference type="PIRSF" id="PIRSF006305">
    <property type="entry name" value="Maf"/>
    <property type="match status" value="1"/>
</dbReference>
<dbReference type="SUPFAM" id="SSF52972">
    <property type="entry name" value="ITPase-like"/>
    <property type="match status" value="1"/>
</dbReference>
<feature type="chain" id="PRO_1000211773" description="Nucleoside triphosphate pyrophosphatase">
    <location>
        <begin position="1"/>
        <end position="215"/>
    </location>
</feature>
<feature type="active site" description="Proton acceptor" evidence="1">
    <location>
        <position position="77"/>
    </location>
</feature>
<organism>
    <name type="scientific">Rickettsia africae (strain ESF-5)</name>
    <dbReference type="NCBI Taxonomy" id="347255"/>
    <lineage>
        <taxon>Bacteria</taxon>
        <taxon>Pseudomonadati</taxon>
        <taxon>Pseudomonadota</taxon>
        <taxon>Alphaproteobacteria</taxon>
        <taxon>Rickettsiales</taxon>
        <taxon>Rickettsiaceae</taxon>
        <taxon>Rickettsieae</taxon>
        <taxon>Rickettsia</taxon>
        <taxon>spotted fever group</taxon>
    </lineage>
</organism>